<evidence type="ECO:0000255" key="1">
    <source>
        <dbReference type="HAMAP-Rule" id="MF_01253"/>
    </source>
</evidence>
<gene>
    <name evidence="1" type="primary">nei</name>
    <name type="ordered locus">ECUMN_0792</name>
</gene>
<keyword id="KW-0227">DNA damage</keyword>
<keyword id="KW-0234">DNA repair</keyword>
<keyword id="KW-0238">DNA-binding</keyword>
<keyword id="KW-0326">Glycosidase</keyword>
<keyword id="KW-0378">Hydrolase</keyword>
<keyword id="KW-0456">Lyase</keyword>
<keyword id="KW-0479">Metal-binding</keyword>
<keyword id="KW-0511">Multifunctional enzyme</keyword>
<keyword id="KW-0862">Zinc</keyword>
<keyword id="KW-0863">Zinc-finger</keyword>
<sequence>MPEGPEIRRAADNLEAAIKGKPLTDVWFAFPQLKSYQSQLIGQHVTHVETRGKALLTHFSNGLTLYSHNQLYGVWRVVDTGEEPQTTRVLRVKLQTADKTILLYSASDIEMLTPEQLTTHPFLQRVGPDVLDPNLTPEVVKERLLSPRFRNRQFAGLLLDQAFLAGLGNYLRVEILWQVGLTGNHKAKDLSAAQLDALAHALLDIPRLSYATRGQVDENKHHGALFRFKVFHRDGEPCERCGSIIEKTTLSSRPFYWCPGCQH</sequence>
<proteinExistence type="inferred from homology"/>
<feature type="initiator methionine" description="Removed" evidence="1">
    <location>
        <position position="1"/>
    </location>
</feature>
<feature type="chain" id="PRO_1000139935" description="Endonuclease 8">
    <location>
        <begin position="2"/>
        <end position="263"/>
    </location>
</feature>
<feature type="zinc finger region" description="FPG-type" evidence="1">
    <location>
        <begin position="229"/>
        <end position="263"/>
    </location>
</feature>
<feature type="active site" description="Schiff-base intermediate with DNA" evidence="1">
    <location>
        <position position="2"/>
    </location>
</feature>
<feature type="active site" description="Proton donor" evidence="1">
    <location>
        <position position="3"/>
    </location>
</feature>
<feature type="active site" description="Proton donor; for beta-elimination activity" evidence="1">
    <location>
        <position position="53"/>
    </location>
</feature>
<feature type="active site" description="Proton donor; for delta-elimination activity" evidence="1">
    <location>
        <position position="253"/>
    </location>
</feature>
<feature type="binding site" evidence="1">
    <location>
        <position position="70"/>
    </location>
    <ligand>
        <name>DNA</name>
        <dbReference type="ChEBI" id="CHEBI:16991"/>
    </ligand>
</feature>
<feature type="binding site" evidence="1">
    <location>
        <position position="125"/>
    </location>
    <ligand>
        <name>DNA</name>
        <dbReference type="ChEBI" id="CHEBI:16991"/>
    </ligand>
</feature>
<feature type="binding site" evidence="1">
    <location>
        <position position="169"/>
    </location>
    <ligand>
        <name>DNA</name>
        <dbReference type="ChEBI" id="CHEBI:16991"/>
    </ligand>
</feature>
<comment type="function">
    <text evidence="1">Involved in base excision repair of DNA damaged by oxidation or by mutagenic agents. Acts as a DNA glycosylase that recognizes and removes damaged bases. Has a preference for oxidized pyrimidines, such as thymine glycol, 5,6-dihydrouracil and 5,6-dihydrothymine. Has AP (apurinic/apyrimidinic) lyase activity and introduces nicks in the DNA strand. Cleaves the DNA backbone by beta-delta elimination to generate a single-strand break at the site of the removed base with both 3'- and 5'-phosphates.</text>
</comment>
<comment type="catalytic activity">
    <reaction evidence="1">
        <text>2'-deoxyribonucleotide-(2'-deoxyribose 5'-phosphate)-2'-deoxyribonucleotide-DNA = a 3'-end 2'-deoxyribonucleotide-(2,3-dehydro-2,3-deoxyribose 5'-phosphate)-DNA + a 5'-end 5'-phospho-2'-deoxyribonucleoside-DNA + H(+)</text>
        <dbReference type="Rhea" id="RHEA:66592"/>
        <dbReference type="Rhea" id="RHEA-COMP:13180"/>
        <dbReference type="Rhea" id="RHEA-COMP:16897"/>
        <dbReference type="Rhea" id="RHEA-COMP:17067"/>
        <dbReference type="ChEBI" id="CHEBI:15378"/>
        <dbReference type="ChEBI" id="CHEBI:136412"/>
        <dbReference type="ChEBI" id="CHEBI:157695"/>
        <dbReference type="ChEBI" id="CHEBI:167181"/>
        <dbReference type="EC" id="4.2.99.18"/>
    </reaction>
</comment>
<comment type="cofactor">
    <cofactor evidence="1">
        <name>Zn(2+)</name>
        <dbReference type="ChEBI" id="CHEBI:29105"/>
    </cofactor>
    <text evidence="1">Binds 1 zinc ion per subunit.</text>
</comment>
<comment type="similarity">
    <text evidence="1">Belongs to the FPG family.</text>
</comment>
<dbReference type="EC" id="3.2.2.-" evidence="1"/>
<dbReference type="EC" id="4.2.99.18" evidence="1"/>
<dbReference type="EMBL" id="CU928163">
    <property type="protein sequence ID" value="CAR12004.1"/>
    <property type="molecule type" value="Genomic_DNA"/>
</dbReference>
<dbReference type="RefSeq" id="WP_001114002.1">
    <property type="nucleotide sequence ID" value="NC_011751.1"/>
</dbReference>
<dbReference type="RefSeq" id="YP_002411550.1">
    <property type="nucleotide sequence ID" value="NC_011751.1"/>
</dbReference>
<dbReference type="SMR" id="B7N9V3"/>
<dbReference type="STRING" id="585056.ECUMN_0792"/>
<dbReference type="KEGG" id="eum:ECUMN_0792"/>
<dbReference type="PATRIC" id="fig|585056.7.peg.996"/>
<dbReference type="HOGENOM" id="CLU_038423_2_2_6"/>
<dbReference type="Proteomes" id="UP000007097">
    <property type="component" value="Chromosome"/>
</dbReference>
<dbReference type="GO" id="GO:0140078">
    <property type="term" value="F:class I DNA-(apurinic or apyrimidinic site) endonuclease activity"/>
    <property type="evidence" value="ECO:0007669"/>
    <property type="project" value="UniProtKB-EC"/>
</dbReference>
<dbReference type="GO" id="GO:0003684">
    <property type="term" value="F:damaged DNA binding"/>
    <property type="evidence" value="ECO:0007669"/>
    <property type="project" value="InterPro"/>
</dbReference>
<dbReference type="GO" id="GO:0000703">
    <property type="term" value="F:oxidized pyrimidine nucleobase lesion DNA N-glycosylase activity"/>
    <property type="evidence" value="ECO:0007669"/>
    <property type="project" value="UniProtKB-UniRule"/>
</dbReference>
<dbReference type="GO" id="GO:0008270">
    <property type="term" value="F:zinc ion binding"/>
    <property type="evidence" value="ECO:0007669"/>
    <property type="project" value="UniProtKB-UniRule"/>
</dbReference>
<dbReference type="GO" id="GO:0006284">
    <property type="term" value="P:base-excision repair"/>
    <property type="evidence" value="ECO:0007669"/>
    <property type="project" value="InterPro"/>
</dbReference>
<dbReference type="CDD" id="cd08965">
    <property type="entry name" value="EcNei-like_N"/>
    <property type="match status" value="1"/>
</dbReference>
<dbReference type="FunFam" id="1.10.8.50:FF:000005">
    <property type="entry name" value="Endonuclease 8"/>
    <property type="match status" value="1"/>
</dbReference>
<dbReference type="FunFam" id="3.20.190.10:FF:000002">
    <property type="entry name" value="Endonuclease 8"/>
    <property type="match status" value="1"/>
</dbReference>
<dbReference type="Gene3D" id="1.10.8.50">
    <property type="match status" value="1"/>
</dbReference>
<dbReference type="Gene3D" id="3.20.190.10">
    <property type="entry name" value="MutM-like, N-terminal"/>
    <property type="match status" value="1"/>
</dbReference>
<dbReference type="HAMAP" id="MF_01253">
    <property type="entry name" value="Endonuclease_8"/>
    <property type="match status" value="1"/>
</dbReference>
<dbReference type="InterPro" id="IPR015886">
    <property type="entry name" value="DNA_glyclase/AP_lyase_DNA-bd"/>
</dbReference>
<dbReference type="InterPro" id="IPR015887">
    <property type="entry name" value="DNA_glyclase_Znf_dom_DNA_BS"/>
</dbReference>
<dbReference type="InterPro" id="IPR044091">
    <property type="entry name" value="EcNei-like_N"/>
</dbReference>
<dbReference type="InterPro" id="IPR023713">
    <property type="entry name" value="Endonuclease-VIII"/>
</dbReference>
<dbReference type="InterPro" id="IPR012319">
    <property type="entry name" value="FPG_cat"/>
</dbReference>
<dbReference type="InterPro" id="IPR035937">
    <property type="entry name" value="MutM-like_N-ter"/>
</dbReference>
<dbReference type="InterPro" id="IPR010979">
    <property type="entry name" value="Ribosomal_uS13-like_H2TH"/>
</dbReference>
<dbReference type="InterPro" id="IPR000214">
    <property type="entry name" value="Znf_DNA_glyclase/AP_lyase"/>
</dbReference>
<dbReference type="InterPro" id="IPR010663">
    <property type="entry name" value="Znf_FPG/IleRS"/>
</dbReference>
<dbReference type="NCBIfam" id="NF007763">
    <property type="entry name" value="PRK10445.1"/>
    <property type="match status" value="1"/>
</dbReference>
<dbReference type="PANTHER" id="PTHR42697">
    <property type="entry name" value="ENDONUCLEASE 8"/>
    <property type="match status" value="1"/>
</dbReference>
<dbReference type="PANTHER" id="PTHR42697:SF1">
    <property type="entry name" value="ENDONUCLEASE 8"/>
    <property type="match status" value="1"/>
</dbReference>
<dbReference type="Pfam" id="PF01149">
    <property type="entry name" value="Fapy_DNA_glyco"/>
    <property type="match status" value="1"/>
</dbReference>
<dbReference type="Pfam" id="PF06831">
    <property type="entry name" value="H2TH"/>
    <property type="match status" value="1"/>
</dbReference>
<dbReference type="Pfam" id="PF06827">
    <property type="entry name" value="zf-FPG_IleRS"/>
    <property type="match status" value="1"/>
</dbReference>
<dbReference type="SMART" id="SM00898">
    <property type="entry name" value="Fapy_DNA_glyco"/>
    <property type="match status" value="1"/>
</dbReference>
<dbReference type="SMART" id="SM01232">
    <property type="entry name" value="H2TH"/>
    <property type="match status" value="1"/>
</dbReference>
<dbReference type="SUPFAM" id="SSF57716">
    <property type="entry name" value="Glucocorticoid receptor-like (DNA-binding domain)"/>
    <property type="match status" value="1"/>
</dbReference>
<dbReference type="SUPFAM" id="SSF81624">
    <property type="entry name" value="N-terminal domain of MutM-like DNA repair proteins"/>
    <property type="match status" value="1"/>
</dbReference>
<dbReference type="SUPFAM" id="SSF46946">
    <property type="entry name" value="S13-like H2TH domain"/>
    <property type="match status" value="1"/>
</dbReference>
<dbReference type="PROSITE" id="PS51068">
    <property type="entry name" value="FPG_CAT"/>
    <property type="match status" value="1"/>
</dbReference>
<dbReference type="PROSITE" id="PS01242">
    <property type="entry name" value="ZF_FPG_1"/>
    <property type="match status" value="1"/>
</dbReference>
<dbReference type="PROSITE" id="PS51066">
    <property type="entry name" value="ZF_FPG_2"/>
    <property type="match status" value="1"/>
</dbReference>
<protein>
    <recommendedName>
        <fullName evidence="1">Endonuclease 8</fullName>
    </recommendedName>
    <alternativeName>
        <fullName evidence="1">DNA glycosylase/AP lyase Nei</fullName>
        <ecNumber evidence="1">3.2.2.-</ecNumber>
        <ecNumber evidence="1">4.2.99.18</ecNumber>
    </alternativeName>
    <alternativeName>
        <fullName evidence="1">DNA-(apurinic or apyrimidinic site) lyase Nei</fullName>
    </alternativeName>
    <alternativeName>
        <fullName evidence="1">Endonuclease VIII</fullName>
    </alternativeName>
</protein>
<accession>B7N9V3</accession>
<name>END8_ECOLU</name>
<organism>
    <name type="scientific">Escherichia coli O17:K52:H18 (strain UMN026 / ExPEC)</name>
    <dbReference type="NCBI Taxonomy" id="585056"/>
    <lineage>
        <taxon>Bacteria</taxon>
        <taxon>Pseudomonadati</taxon>
        <taxon>Pseudomonadota</taxon>
        <taxon>Gammaproteobacteria</taxon>
        <taxon>Enterobacterales</taxon>
        <taxon>Enterobacteriaceae</taxon>
        <taxon>Escherichia</taxon>
    </lineage>
</organism>
<reference key="1">
    <citation type="journal article" date="2009" name="PLoS Genet.">
        <title>Organised genome dynamics in the Escherichia coli species results in highly diverse adaptive paths.</title>
        <authorList>
            <person name="Touchon M."/>
            <person name="Hoede C."/>
            <person name="Tenaillon O."/>
            <person name="Barbe V."/>
            <person name="Baeriswyl S."/>
            <person name="Bidet P."/>
            <person name="Bingen E."/>
            <person name="Bonacorsi S."/>
            <person name="Bouchier C."/>
            <person name="Bouvet O."/>
            <person name="Calteau A."/>
            <person name="Chiapello H."/>
            <person name="Clermont O."/>
            <person name="Cruveiller S."/>
            <person name="Danchin A."/>
            <person name="Diard M."/>
            <person name="Dossat C."/>
            <person name="Karoui M.E."/>
            <person name="Frapy E."/>
            <person name="Garry L."/>
            <person name="Ghigo J.M."/>
            <person name="Gilles A.M."/>
            <person name="Johnson J."/>
            <person name="Le Bouguenec C."/>
            <person name="Lescat M."/>
            <person name="Mangenot S."/>
            <person name="Martinez-Jehanne V."/>
            <person name="Matic I."/>
            <person name="Nassif X."/>
            <person name="Oztas S."/>
            <person name="Petit M.A."/>
            <person name="Pichon C."/>
            <person name="Rouy Z."/>
            <person name="Ruf C.S."/>
            <person name="Schneider D."/>
            <person name="Tourret J."/>
            <person name="Vacherie B."/>
            <person name="Vallenet D."/>
            <person name="Medigue C."/>
            <person name="Rocha E.P.C."/>
            <person name="Denamur E."/>
        </authorList>
    </citation>
    <scope>NUCLEOTIDE SEQUENCE [LARGE SCALE GENOMIC DNA]</scope>
    <source>
        <strain>UMN026 / ExPEC</strain>
    </source>
</reference>